<gene>
    <name evidence="1" type="primary">truB</name>
    <name type="ordered locus">Tola_2244</name>
</gene>
<protein>
    <recommendedName>
        <fullName evidence="1">tRNA pseudouridine synthase B</fullName>
        <ecNumber evidence="1">5.4.99.25</ecNumber>
    </recommendedName>
    <alternativeName>
        <fullName evidence="1">tRNA pseudouridine(55) synthase</fullName>
        <shortName evidence="1">Psi55 synthase</shortName>
    </alternativeName>
    <alternativeName>
        <fullName evidence="1">tRNA pseudouridylate synthase</fullName>
    </alternativeName>
    <alternativeName>
        <fullName evidence="1">tRNA-uridine isomerase</fullName>
    </alternativeName>
</protein>
<keyword id="KW-0413">Isomerase</keyword>
<keyword id="KW-1185">Reference proteome</keyword>
<keyword id="KW-0819">tRNA processing</keyword>
<organism>
    <name type="scientific">Tolumonas auensis (strain DSM 9187 / NBRC 110442 / TA 4)</name>
    <dbReference type="NCBI Taxonomy" id="595494"/>
    <lineage>
        <taxon>Bacteria</taxon>
        <taxon>Pseudomonadati</taxon>
        <taxon>Pseudomonadota</taxon>
        <taxon>Gammaproteobacteria</taxon>
        <taxon>Aeromonadales</taxon>
        <taxon>Aeromonadaceae</taxon>
        <taxon>Tolumonas</taxon>
    </lineage>
</organism>
<dbReference type="EC" id="5.4.99.25" evidence="1"/>
<dbReference type="EMBL" id="CP001616">
    <property type="protein sequence ID" value="ACQ93842.1"/>
    <property type="molecule type" value="Genomic_DNA"/>
</dbReference>
<dbReference type="RefSeq" id="WP_015879310.1">
    <property type="nucleotide sequence ID" value="NC_012691.1"/>
</dbReference>
<dbReference type="SMR" id="C4L8X2"/>
<dbReference type="STRING" id="595494.Tola_2244"/>
<dbReference type="KEGG" id="tau:Tola_2244"/>
<dbReference type="eggNOG" id="COG0130">
    <property type="taxonomic scope" value="Bacteria"/>
</dbReference>
<dbReference type="HOGENOM" id="CLU_032087_0_3_6"/>
<dbReference type="OrthoDB" id="9802309at2"/>
<dbReference type="Proteomes" id="UP000009073">
    <property type="component" value="Chromosome"/>
</dbReference>
<dbReference type="GO" id="GO:0003723">
    <property type="term" value="F:RNA binding"/>
    <property type="evidence" value="ECO:0007669"/>
    <property type="project" value="InterPro"/>
</dbReference>
<dbReference type="GO" id="GO:0160148">
    <property type="term" value="F:tRNA pseudouridine(55) synthase activity"/>
    <property type="evidence" value="ECO:0007669"/>
    <property type="project" value="UniProtKB-EC"/>
</dbReference>
<dbReference type="GO" id="GO:1990481">
    <property type="term" value="P:mRNA pseudouridine synthesis"/>
    <property type="evidence" value="ECO:0007669"/>
    <property type="project" value="TreeGrafter"/>
</dbReference>
<dbReference type="GO" id="GO:0031119">
    <property type="term" value="P:tRNA pseudouridine synthesis"/>
    <property type="evidence" value="ECO:0007669"/>
    <property type="project" value="UniProtKB-UniRule"/>
</dbReference>
<dbReference type="CDD" id="cd02573">
    <property type="entry name" value="PseudoU_synth_EcTruB"/>
    <property type="match status" value="1"/>
</dbReference>
<dbReference type="CDD" id="cd21152">
    <property type="entry name" value="PUA_TruB_bacterial"/>
    <property type="match status" value="1"/>
</dbReference>
<dbReference type="FunFam" id="2.30.130.10:FF:000004">
    <property type="entry name" value="tRNA pseudouridine synthase B"/>
    <property type="match status" value="1"/>
</dbReference>
<dbReference type="FunFam" id="3.30.2350.10:FF:000003">
    <property type="entry name" value="tRNA pseudouridine synthase B"/>
    <property type="match status" value="1"/>
</dbReference>
<dbReference type="Gene3D" id="3.30.2350.10">
    <property type="entry name" value="Pseudouridine synthase"/>
    <property type="match status" value="1"/>
</dbReference>
<dbReference type="Gene3D" id="2.30.130.10">
    <property type="entry name" value="PUA domain"/>
    <property type="match status" value="1"/>
</dbReference>
<dbReference type="HAMAP" id="MF_01080">
    <property type="entry name" value="TruB_bact"/>
    <property type="match status" value="1"/>
</dbReference>
<dbReference type="InterPro" id="IPR020103">
    <property type="entry name" value="PsdUridine_synth_cat_dom_sf"/>
</dbReference>
<dbReference type="InterPro" id="IPR002501">
    <property type="entry name" value="PsdUridine_synth_N"/>
</dbReference>
<dbReference type="InterPro" id="IPR015947">
    <property type="entry name" value="PUA-like_sf"/>
</dbReference>
<dbReference type="InterPro" id="IPR036974">
    <property type="entry name" value="PUA_sf"/>
</dbReference>
<dbReference type="InterPro" id="IPR014780">
    <property type="entry name" value="tRNA_psdUridine_synth_TruB"/>
</dbReference>
<dbReference type="InterPro" id="IPR015240">
    <property type="entry name" value="tRNA_sdUridine_synth_fam1_C"/>
</dbReference>
<dbReference type="InterPro" id="IPR032819">
    <property type="entry name" value="TruB_C"/>
</dbReference>
<dbReference type="NCBIfam" id="TIGR00431">
    <property type="entry name" value="TruB"/>
    <property type="match status" value="1"/>
</dbReference>
<dbReference type="PANTHER" id="PTHR13767:SF2">
    <property type="entry name" value="PSEUDOURIDYLATE SYNTHASE TRUB1"/>
    <property type="match status" value="1"/>
</dbReference>
<dbReference type="PANTHER" id="PTHR13767">
    <property type="entry name" value="TRNA-PSEUDOURIDINE SYNTHASE"/>
    <property type="match status" value="1"/>
</dbReference>
<dbReference type="Pfam" id="PF09157">
    <property type="entry name" value="TruB-C_2"/>
    <property type="match status" value="1"/>
</dbReference>
<dbReference type="Pfam" id="PF16198">
    <property type="entry name" value="TruB_C_2"/>
    <property type="match status" value="1"/>
</dbReference>
<dbReference type="Pfam" id="PF01509">
    <property type="entry name" value="TruB_N"/>
    <property type="match status" value="1"/>
</dbReference>
<dbReference type="SUPFAM" id="SSF55120">
    <property type="entry name" value="Pseudouridine synthase"/>
    <property type="match status" value="1"/>
</dbReference>
<dbReference type="SUPFAM" id="SSF88697">
    <property type="entry name" value="PUA domain-like"/>
    <property type="match status" value="1"/>
</dbReference>
<proteinExistence type="inferred from homology"/>
<comment type="function">
    <text evidence="1">Responsible for synthesis of pseudouridine from uracil-55 in the psi GC loop of transfer RNAs.</text>
</comment>
<comment type="catalytic activity">
    <reaction evidence="1">
        <text>uridine(55) in tRNA = pseudouridine(55) in tRNA</text>
        <dbReference type="Rhea" id="RHEA:42532"/>
        <dbReference type="Rhea" id="RHEA-COMP:10101"/>
        <dbReference type="Rhea" id="RHEA-COMP:10102"/>
        <dbReference type="ChEBI" id="CHEBI:65314"/>
        <dbReference type="ChEBI" id="CHEBI:65315"/>
        <dbReference type="EC" id="5.4.99.25"/>
    </reaction>
</comment>
<comment type="similarity">
    <text evidence="1">Belongs to the pseudouridine synthase TruB family. Type 1 subfamily.</text>
</comment>
<evidence type="ECO:0000255" key="1">
    <source>
        <dbReference type="HAMAP-Rule" id="MF_01080"/>
    </source>
</evidence>
<name>TRUB_TOLAT</name>
<feature type="chain" id="PRO_1000213509" description="tRNA pseudouridine synthase B">
    <location>
        <begin position="1"/>
        <end position="324"/>
    </location>
</feature>
<feature type="active site" description="Nucleophile" evidence="1">
    <location>
        <position position="49"/>
    </location>
</feature>
<accession>C4L8X2</accession>
<sequence>MSRRRRFKGRDVHGIILLDKPGGITSNDALQQVKRIYNAAKAGHTGALDPLATGMLPICFGEATKFSQFLLDADKRYQVTARLGVRTDTSDSEGSVVSVRPVDVSEDQLAQALDKFRGDIMQVPSMFSALKHQGRPLYEYAREGIEIEREARPITIYSLELKAFSGEEISLEVHCSKGTYIRSLIDDLGELLGCGAHVIQLRRTQVACYPNDKMLNLEKLNEILDECREQGVPPRERLDQYLLPMDSAVYSLPEVNMPPVLAAYVTQGQAVMVPHAPIEGFVRMTVGPEAEFIGVGEIDDDGKVAPRRLVRIGGDMPDAEEQAE</sequence>
<reference key="1">
    <citation type="submission" date="2009-05" db="EMBL/GenBank/DDBJ databases">
        <title>Complete sequence of Tolumonas auensis DSM 9187.</title>
        <authorList>
            <consortium name="US DOE Joint Genome Institute"/>
            <person name="Lucas S."/>
            <person name="Copeland A."/>
            <person name="Lapidus A."/>
            <person name="Glavina del Rio T."/>
            <person name="Tice H."/>
            <person name="Bruce D."/>
            <person name="Goodwin L."/>
            <person name="Pitluck S."/>
            <person name="Chertkov O."/>
            <person name="Brettin T."/>
            <person name="Detter J.C."/>
            <person name="Han C."/>
            <person name="Larimer F."/>
            <person name="Land M."/>
            <person name="Hauser L."/>
            <person name="Kyrpides N."/>
            <person name="Mikhailova N."/>
            <person name="Spring S."/>
            <person name="Beller H."/>
        </authorList>
    </citation>
    <scope>NUCLEOTIDE SEQUENCE [LARGE SCALE GENOMIC DNA]</scope>
    <source>
        <strain>DSM 9187 / NBRC 110442 / TA 4</strain>
    </source>
</reference>